<dbReference type="EC" id="2.8.1.13" evidence="1"/>
<dbReference type="EMBL" id="CP000009">
    <property type="protein sequence ID" value="AAW61123.1"/>
    <property type="status" value="ALT_INIT"/>
    <property type="molecule type" value="Genomic_DNA"/>
</dbReference>
<dbReference type="RefSeq" id="WP_024716610.1">
    <property type="nucleotide sequence ID" value="NC_006677.1"/>
</dbReference>
<dbReference type="SMR" id="Q5FR73"/>
<dbReference type="STRING" id="290633.GOX1371"/>
<dbReference type="KEGG" id="gox:GOX1371"/>
<dbReference type="eggNOG" id="COG0482">
    <property type="taxonomic scope" value="Bacteria"/>
</dbReference>
<dbReference type="HOGENOM" id="CLU_035188_0_1_5"/>
<dbReference type="Proteomes" id="UP000006375">
    <property type="component" value="Chromosome"/>
</dbReference>
<dbReference type="GO" id="GO:0005737">
    <property type="term" value="C:cytoplasm"/>
    <property type="evidence" value="ECO:0007669"/>
    <property type="project" value="UniProtKB-SubCell"/>
</dbReference>
<dbReference type="GO" id="GO:0005524">
    <property type="term" value="F:ATP binding"/>
    <property type="evidence" value="ECO:0007669"/>
    <property type="project" value="UniProtKB-KW"/>
</dbReference>
<dbReference type="GO" id="GO:0000049">
    <property type="term" value="F:tRNA binding"/>
    <property type="evidence" value="ECO:0007669"/>
    <property type="project" value="UniProtKB-KW"/>
</dbReference>
<dbReference type="GO" id="GO:0103016">
    <property type="term" value="F:tRNA-uridine 2-sulfurtransferase activity"/>
    <property type="evidence" value="ECO:0007669"/>
    <property type="project" value="UniProtKB-EC"/>
</dbReference>
<dbReference type="GO" id="GO:0002143">
    <property type="term" value="P:tRNA wobble position uridine thiolation"/>
    <property type="evidence" value="ECO:0007669"/>
    <property type="project" value="TreeGrafter"/>
</dbReference>
<dbReference type="CDD" id="cd01998">
    <property type="entry name" value="MnmA_TRMU-like"/>
    <property type="match status" value="1"/>
</dbReference>
<dbReference type="Gene3D" id="2.30.30.280">
    <property type="entry name" value="Adenine nucleotide alpha hydrolases-like domains"/>
    <property type="match status" value="1"/>
</dbReference>
<dbReference type="Gene3D" id="3.40.50.620">
    <property type="entry name" value="HUPs"/>
    <property type="match status" value="1"/>
</dbReference>
<dbReference type="Gene3D" id="2.40.30.10">
    <property type="entry name" value="Translation factors"/>
    <property type="match status" value="1"/>
</dbReference>
<dbReference type="HAMAP" id="MF_00144">
    <property type="entry name" value="tRNA_thiouridyl_MnmA"/>
    <property type="match status" value="1"/>
</dbReference>
<dbReference type="InterPro" id="IPR004506">
    <property type="entry name" value="MnmA-like"/>
</dbReference>
<dbReference type="InterPro" id="IPR046885">
    <property type="entry name" value="MnmA-like_C"/>
</dbReference>
<dbReference type="InterPro" id="IPR046884">
    <property type="entry name" value="MnmA-like_central"/>
</dbReference>
<dbReference type="InterPro" id="IPR023382">
    <property type="entry name" value="MnmA-like_central_sf"/>
</dbReference>
<dbReference type="InterPro" id="IPR014729">
    <property type="entry name" value="Rossmann-like_a/b/a_fold"/>
</dbReference>
<dbReference type="NCBIfam" id="NF001138">
    <property type="entry name" value="PRK00143.1"/>
    <property type="match status" value="1"/>
</dbReference>
<dbReference type="NCBIfam" id="TIGR00420">
    <property type="entry name" value="trmU"/>
    <property type="match status" value="1"/>
</dbReference>
<dbReference type="PANTHER" id="PTHR11933:SF5">
    <property type="entry name" value="MITOCHONDRIAL TRNA-SPECIFIC 2-THIOURIDYLASE 1"/>
    <property type="match status" value="1"/>
</dbReference>
<dbReference type="PANTHER" id="PTHR11933">
    <property type="entry name" value="TRNA 5-METHYLAMINOMETHYL-2-THIOURIDYLATE -METHYLTRANSFERASE"/>
    <property type="match status" value="1"/>
</dbReference>
<dbReference type="Pfam" id="PF03054">
    <property type="entry name" value="tRNA_Me_trans"/>
    <property type="match status" value="1"/>
</dbReference>
<dbReference type="Pfam" id="PF20258">
    <property type="entry name" value="tRNA_Me_trans_C"/>
    <property type="match status" value="1"/>
</dbReference>
<dbReference type="Pfam" id="PF20259">
    <property type="entry name" value="tRNA_Me_trans_M"/>
    <property type="match status" value="1"/>
</dbReference>
<dbReference type="SUPFAM" id="SSF52402">
    <property type="entry name" value="Adenine nucleotide alpha hydrolases-like"/>
    <property type="match status" value="1"/>
</dbReference>
<organism>
    <name type="scientific">Gluconobacter oxydans (strain 621H)</name>
    <name type="common">Gluconobacter suboxydans</name>
    <dbReference type="NCBI Taxonomy" id="290633"/>
    <lineage>
        <taxon>Bacteria</taxon>
        <taxon>Pseudomonadati</taxon>
        <taxon>Pseudomonadota</taxon>
        <taxon>Alphaproteobacteria</taxon>
        <taxon>Acetobacterales</taxon>
        <taxon>Acetobacteraceae</taxon>
        <taxon>Gluconobacter</taxon>
    </lineage>
</organism>
<feature type="chain" id="PRO_0000349651" description="tRNA-specific 2-thiouridylase MnmA">
    <location>
        <begin position="1"/>
        <end position="361"/>
    </location>
</feature>
<feature type="region of interest" description="Interaction with tRNA" evidence="1">
    <location>
        <begin position="145"/>
        <end position="147"/>
    </location>
</feature>
<feature type="active site" description="Nucleophile" evidence="1">
    <location>
        <position position="99"/>
    </location>
</feature>
<feature type="active site" description="Cysteine persulfide intermediate" evidence="1">
    <location>
        <position position="196"/>
    </location>
</feature>
<feature type="binding site" evidence="1">
    <location>
        <begin position="6"/>
        <end position="13"/>
    </location>
    <ligand>
        <name>ATP</name>
        <dbReference type="ChEBI" id="CHEBI:30616"/>
    </ligand>
</feature>
<feature type="binding site" evidence="1">
    <location>
        <position position="32"/>
    </location>
    <ligand>
        <name>ATP</name>
        <dbReference type="ChEBI" id="CHEBI:30616"/>
    </ligand>
</feature>
<feature type="binding site" evidence="1">
    <location>
        <position position="123"/>
    </location>
    <ligand>
        <name>ATP</name>
        <dbReference type="ChEBI" id="CHEBI:30616"/>
    </ligand>
</feature>
<feature type="site" description="Interaction with tRNA" evidence="1">
    <location>
        <position position="124"/>
    </location>
</feature>
<feature type="site" description="Interaction with tRNA" evidence="1">
    <location>
        <position position="340"/>
    </location>
</feature>
<feature type="disulfide bond" description="Alternate" evidence="1">
    <location>
        <begin position="99"/>
        <end position="196"/>
    </location>
</feature>
<evidence type="ECO:0000255" key="1">
    <source>
        <dbReference type="HAMAP-Rule" id="MF_00144"/>
    </source>
</evidence>
<evidence type="ECO:0000305" key="2"/>
<keyword id="KW-0067">ATP-binding</keyword>
<keyword id="KW-0963">Cytoplasm</keyword>
<keyword id="KW-1015">Disulfide bond</keyword>
<keyword id="KW-0547">Nucleotide-binding</keyword>
<keyword id="KW-1185">Reference proteome</keyword>
<keyword id="KW-0694">RNA-binding</keyword>
<keyword id="KW-0808">Transferase</keyword>
<keyword id="KW-0819">tRNA processing</keyword>
<keyword id="KW-0820">tRNA-binding</keyword>
<protein>
    <recommendedName>
        <fullName evidence="1">tRNA-specific 2-thiouridylase MnmA</fullName>
        <ecNumber evidence="1">2.8.1.13</ecNumber>
    </recommendedName>
</protein>
<accession>Q5FR73</accession>
<comment type="function">
    <text evidence="1">Catalyzes the 2-thiolation of uridine at the wobble position (U34) of tRNA, leading to the formation of s(2)U34.</text>
</comment>
<comment type="catalytic activity">
    <reaction evidence="1">
        <text>S-sulfanyl-L-cysteinyl-[protein] + uridine(34) in tRNA + AH2 + ATP = 2-thiouridine(34) in tRNA + L-cysteinyl-[protein] + A + AMP + diphosphate + H(+)</text>
        <dbReference type="Rhea" id="RHEA:47032"/>
        <dbReference type="Rhea" id="RHEA-COMP:10131"/>
        <dbReference type="Rhea" id="RHEA-COMP:11726"/>
        <dbReference type="Rhea" id="RHEA-COMP:11727"/>
        <dbReference type="Rhea" id="RHEA-COMP:11728"/>
        <dbReference type="ChEBI" id="CHEBI:13193"/>
        <dbReference type="ChEBI" id="CHEBI:15378"/>
        <dbReference type="ChEBI" id="CHEBI:17499"/>
        <dbReference type="ChEBI" id="CHEBI:29950"/>
        <dbReference type="ChEBI" id="CHEBI:30616"/>
        <dbReference type="ChEBI" id="CHEBI:33019"/>
        <dbReference type="ChEBI" id="CHEBI:61963"/>
        <dbReference type="ChEBI" id="CHEBI:65315"/>
        <dbReference type="ChEBI" id="CHEBI:87170"/>
        <dbReference type="ChEBI" id="CHEBI:456215"/>
        <dbReference type="EC" id="2.8.1.13"/>
    </reaction>
</comment>
<comment type="subcellular location">
    <subcellularLocation>
        <location evidence="1">Cytoplasm</location>
    </subcellularLocation>
</comment>
<comment type="similarity">
    <text evidence="1">Belongs to the MnmA/TRMU family.</text>
</comment>
<comment type="sequence caution" evidence="2">
    <conflict type="erroneous initiation">
        <sequence resource="EMBL-CDS" id="AAW61123"/>
    </conflict>
</comment>
<name>MNMA_GLUOX</name>
<gene>
    <name evidence="1" type="primary">mnmA</name>
    <name type="ordered locus">GOX1371</name>
</gene>
<reference key="1">
    <citation type="journal article" date="2005" name="Nat. Biotechnol.">
        <title>Complete genome sequence of the acetic acid bacterium Gluconobacter oxydans.</title>
        <authorList>
            <person name="Prust C."/>
            <person name="Hoffmeister M."/>
            <person name="Liesegang H."/>
            <person name="Wiezer A."/>
            <person name="Fricke W.F."/>
            <person name="Ehrenreich A."/>
            <person name="Gottschalk G."/>
            <person name="Deppenmeier U."/>
        </authorList>
    </citation>
    <scope>NUCLEOTIDE SEQUENCE [LARGE SCALE GENOMIC DNA]</scope>
    <source>
        <strain>621H</strain>
    </source>
</reference>
<sequence>MRILVAMSGGVDSSVVAALLKRQGHEVIGATLQLYDHGQAAKPGACCAGRDIMDARAVADRLGFPHYVIDAESRFRDSVVESFADAYARGETPVPCVACNQGVKFTDLLGMARDLGCEAMATGHYVRRVEGPEGAEMHRPVDAERDQTWFLFATTKDQLDYLRFPLGEMPDKAHVRALAQELGLEIAAKPDSQDICFVPSGSYAELVEKLRPEVRGEGEIVDEDGRVLGRHEGVARYTVGQSKRLGDIHTATGERQMVTRIDVPKRRIVVGPRVQVSEADSRRSVRLRDMNWLIDAPAEGVRCGVQIRAREKLREALVKPLENGGALVELTEAAMPAPGQACVLYDGSRVLGGGFITAGDA</sequence>
<proteinExistence type="inferred from homology"/>